<protein>
    <recommendedName>
        <fullName evidence="1">Glucose-6-phosphate isomerase</fullName>
        <shortName evidence="1">GPI</shortName>
        <ecNumber evidence="1">5.3.1.9</ecNumber>
    </recommendedName>
    <alternativeName>
        <fullName evidence="1">Phosphoglucose isomerase</fullName>
        <shortName evidence="1">PGI</shortName>
    </alternativeName>
    <alternativeName>
        <fullName evidence="1">Phosphohexose isomerase</fullName>
        <shortName evidence="1">PHI</shortName>
    </alternativeName>
</protein>
<feature type="chain" id="PRO_0000252654" description="Glucose-6-phosphate isomerase">
    <location>
        <begin position="1"/>
        <end position="532"/>
    </location>
</feature>
<feature type="active site" description="Proton donor" evidence="1">
    <location>
        <position position="330"/>
    </location>
</feature>
<feature type="active site" evidence="1">
    <location>
        <position position="359"/>
    </location>
</feature>
<feature type="active site" evidence="1">
    <location>
        <position position="461"/>
    </location>
</feature>
<accession>Q3AJU7</accession>
<proteinExistence type="inferred from homology"/>
<organism>
    <name type="scientific">Synechococcus sp. (strain CC9605)</name>
    <dbReference type="NCBI Taxonomy" id="110662"/>
    <lineage>
        <taxon>Bacteria</taxon>
        <taxon>Bacillati</taxon>
        <taxon>Cyanobacteriota</taxon>
        <taxon>Cyanophyceae</taxon>
        <taxon>Synechococcales</taxon>
        <taxon>Synechococcaceae</taxon>
        <taxon>Synechococcus</taxon>
    </lineage>
</organism>
<keyword id="KW-0963">Cytoplasm</keyword>
<keyword id="KW-0312">Gluconeogenesis</keyword>
<keyword id="KW-0324">Glycolysis</keyword>
<keyword id="KW-0413">Isomerase</keyword>
<gene>
    <name evidence="1" type="primary">pgi</name>
    <name type="ordered locus">Syncc9605_1381</name>
</gene>
<reference key="1">
    <citation type="submission" date="2005-07" db="EMBL/GenBank/DDBJ databases">
        <title>Complete sequence of Synechococcus sp. CC9605.</title>
        <authorList>
            <consortium name="US DOE Joint Genome Institute"/>
            <person name="Copeland A."/>
            <person name="Lucas S."/>
            <person name="Lapidus A."/>
            <person name="Barry K."/>
            <person name="Detter J.C."/>
            <person name="Glavina T."/>
            <person name="Hammon N."/>
            <person name="Israni S."/>
            <person name="Pitluck S."/>
            <person name="Schmutz J."/>
            <person name="Martinez M."/>
            <person name="Larimer F."/>
            <person name="Land M."/>
            <person name="Kyrpides N."/>
            <person name="Ivanova N."/>
            <person name="Richardson P."/>
        </authorList>
    </citation>
    <scope>NUCLEOTIDE SEQUENCE [LARGE SCALE GENOMIC DNA]</scope>
    <source>
        <strain>CC9605</strain>
    </source>
</reference>
<evidence type="ECO:0000255" key="1">
    <source>
        <dbReference type="HAMAP-Rule" id="MF_00473"/>
    </source>
</evidence>
<comment type="function">
    <text evidence="1">Catalyzes the reversible isomerization of glucose-6-phosphate to fructose-6-phosphate.</text>
</comment>
<comment type="catalytic activity">
    <reaction evidence="1">
        <text>alpha-D-glucose 6-phosphate = beta-D-fructose 6-phosphate</text>
        <dbReference type="Rhea" id="RHEA:11816"/>
        <dbReference type="ChEBI" id="CHEBI:57634"/>
        <dbReference type="ChEBI" id="CHEBI:58225"/>
        <dbReference type="EC" id="5.3.1.9"/>
    </reaction>
</comment>
<comment type="pathway">
    <text evidence="1">Carbohydrate biosynthesis; gluconeogenesis.</text>
</comment>
<comment type="pathway">
    <text evidence="1">Carbohydrate degradation; glycolysis; D-glyceraldehyde 3-phosphate and glycerone phosphate from D-glucose: step 2/4.</text>
</comment>
<comment type="subcellular location">
    <subcellularLocation>
        <location evidence="1">Cytoplasm</location>
    </subcellularLocation>
</comment>
<comment type="similarity">
    <text evidence="1">Belongs to the GPI family.</text>
</comment>
<sequence length="532" mass="58114">MSFPDFSASDAHIQWQRFCDLSWYHDDLGVWLDISRMHVNASDLQQLQPRMDKAFAAMQELEAGAIANPDEQRQVGHYWLRTPELAPSSELQQHISREIDLIAAFGRDVVNGTIKAPNGEAFTDVLWIGIGGSGLGPALMIKALQNPGEGLPFHFFDNVDPNGMSNVLAGLEGRLDRTLVVTVSKSGGTPEPHLGMEQARHRLEAAGGQWAGQAVAVTMLDSKLDQQAQKEGWLKRFDMFDWVGGRTSITSAVGLLPGALIGCDIRDFLSGASQMDAATRMADLRRNPAALMAASWHVAGGGRGQRDMVVLPYRDRLEVFSRYLQQLVMESLGKRLDRNGDVVHQGIAVYGNKGSTDQHAYVQQLRDGVDNFFATFIEVLEDVSDIPTISGECPGDFLDGFLQGTRSALTESGRQSMTISMRCFDARRLGALIALFERAVGLYGELVNINAYHQPGVEAGKKAAAAILNLQGRVEAILADGVARSADEIRLALGDGTDESIFWILRHLTGNQRGFSAQGDWSQPASMRFSKG</sequence>
<name>G6PI_SYNSC</name>
<dbReference type="EC" id="5.3.1.9" evidence="1"/>
<dbReference type="EMBL" id="CP000110">
    <property type="protein sequence ID" value="ABB35135.1"/>
    <property type="molecule type" value="Genomic_DNA"/>
</dbReference>
<dbReference type="RefSeq" id="WP_041434765.1">
    <property type="nucleotide sequence ID" value="NC_007516.1"/>
</dbReference>
<dbReference type="SMR" id="Q3AJU7"/>
<dbReference type="STRING" id="110662.Syncc9605_1381"/>
<dbReference type="KEGG" id="syd:Syncc9605_1381"/>
<dbReference type="eggNOG" id="COG0166">
    <property type="taxonomic scope" value="Bacteria"/>
</dbReference>
<dbReference type="HOGENOM" id="CLU_033288_0_0_3"/>
<dbReference type="OrthoDB" id="140919at2"/>
<dbReference type="UniPathway" id="UPA00109">
    <property type="reaction ID" value="UER00181"/>
</dbReference>
<dbReference type="UniPathway" id="UPA00138"/>
<dbReference type="GO" id="GO:0005829">
    <property type="term" value="C:cytosol"/>
    <property type="evidence" value="ECO:0007669"/>
    <property type="project" value="TreeGrafter"/>
</dbReference>
<dbReference type="GO" id="GO:0097367">
    <property type="term" value="F:carbohydrate derivative binding"/>
    <property type="evidence" value="ECO:0007669"/>
    <property type="project" value="InterPro"/>
</dbReference>
<dbReference type="GO" id="GO:0004347">
    <property type="term" value="F:glucose-6-phosphate isomerase activity"/>
    <property type="evidence" value="ECO:0007669"/>
    <property type="project" value="UniProtKB-UniRule"/>
</dbReference>
<dbReference type="GO" id="GO:0048029">
    <property type="term" value="F:monosaccharide binding"/>
    <property type="evidence" value="ECO:0007669"/>
    <property type="project" value="TreeGrafter"/>
</dbReference>
<dbReference type="GO" id="GO:0006094">
    <property type="term" value="P:gluconeogenesis"/>
    <property type="evidence" value="ECO:0007669"/>
    <property type="project" value="UniProtKB-UniRule"/>
</dbReference>
<dbReference type="GO" id="GO:0051156">
    <property type="term" value="P:glucose 6-phosphate metabolic process"/>
    <property type="evidence" value="ECO:0007669"/>
    <property type="project" value="TreeGrafter"/>
</dbReference>
<dbReference type="GO" id="GO:0006096">
    <property type="term" value="P:glycolytic process"/>
    <property type="evidence" value="ECO:0007669"/>
    <property type="project" value="UniProtKB-UniRule"/>
</dbReference>
<dbReference type="CDD" id="cd05015">
    <property type="entry name" value="SIS_PGI_1"/>
    <property type="match status" value="1"/>
</dbReference>
<dbReference type="CDD" id="cd05016">
    <property type="entry name" value="SIS_PGI_2"/>
    <property type="match status" value="1"/>
</dbReference>
<dbReference type="FunFam" id="3.40.50.10490:FF:000021">
    <property type="entry name" value="Glucose-6-phosphate isomerase"/>
    <property type="match status" value="1"/>
</dbReference>
<dbReference type="Gene3D" id="3.40.50.10490">
    <property type="entry name" value="Glucose-6-phosphate isomerase like protein, domain 1"/>
    <property type="match status" value="2"/>
</dbReference>
<dbReference type="HAMAP" id="MF_00473">
    <property type="entry name" value="G6P_isomerase"/>
    <property type="match status" value="1"/>
</dbReference>
<dbReference type="InterPro" id="IPR001672">
    <property type="entry name" value="G6P_Isomerase"/>
</dbReference>
<dbReference type="InterPro" id="IPR018189">
    <property type="entry name" value="Phosphoglucose_isomerase_CS"/>
</dbReference>
<dbReference type="InterPro" id="IPR046348">
    <property type="entry name" value="SIS_dom_sf"/>
</dbReference>
<dbReference type="InterPro" id="IPR035476">
    <property type="entry name" value="SIS_PGI_1"/>
</dbReference>
<dbReference type="InterPro" id="IPR035482">
    <property type="entry name" value="SIS_PGI_2"/>
</dbReference>
<dbReference type="NCBIfam" id="NF010696">
    <property type="entry name" value="PRK14096.1"/>
    <property type="match status" value="1"/>
</dbReference>
<dbReference type="PANTHER" id="PTHR11469">
    <property type="entry name" value="GLUCOSE-6-PHOSPHATE ISOMERASE"/>
    <property type="match status" value="1"/>
</dbReference>
<dbReference type="PANTHER" id="PTHR11469:SF1">
    <property type="entry name" value="GLUCOSE-6-PHOSPHATE ISOMERASE"/>
    <property type="match status" value="1"/>
</dbReference>
<dbReference type="Pfam" id="PF00342">
    <property type="entry name" value="PGI"/>
    <property type="match status" value="2"/>
</dbReference>
<dbReference type="PRINTS" id="PR00662">
    <property type="entry name" value="G6PISOMERASE"/>
</dbReference>
<dbReference type="SUPFAM" id="SSF53697">
    <property type="entry name" value="SIS domain"/>
    <property type="match status" value="1"/>
</dbReference>
<dbReference type="PROSITE" id="PS00174">
    <property type="entry name" value="P_GLUCOSE_ISOMERASE_2"/>
    <property type="match status" value="1"/>
</dbReference>
<dbReference type="PROSITE" id="PS51463">
    <property type="entry name" value="P_GLUCOSE_ISOMERASE_3"/>
    <property type="match status" value="1"/>
</dbReference>